<protein>
    <recommendedName>
        <fullName evidence="1">tRNA pseudouridine synthase B</fullName>
        <ecNumber evidence="1">5.4.99.25</ecNumber>
    </recommendedName>
    <alternativeName>
        <fullName evidence="1">tRNA pseudouridine(55) synthase</fullName>
        <shortName evidence="1">Psi55 synthase</shortName>
    </alternativeName>
    <alternativeName>
        <fullName evidence="1">tRNA pseudouridylate synthase</fullName>
    </alternativeName>
    <alternativeName>
        <fullName evidence="1">tRNA-uridine isomerase</fullName>
    </alternativeName>
</protein>
<dbReference type="EC" id="5.4.99.25" evidence="1"/>
<dbReference type="EMBL" id="CP000243">
    <property type="protein sequence ID" value="ABE09042.1"/>
    <property type="molecule type" value="Genomic_DNA"/>
</dbReference>
<dbReference type="RefSeq" id="WP_000089698.1">
    <property type="nucleotide sequence ID" value="NZ_CP064825.1"/>
</dbReference>
<dbReference type="SMR" id="Q1R6H2"/>
<dbReference type="GeneID" id="93778817"/>
<dbReference type="KEGG" id="eci:UTI89_C3596"/>
<dbReference type="HOGENOM" id="CLU_032087_0_3_6"/>
<dbReference type="Proteomes" id="UP000001952">
    <property type="component" value="Chromosome"/>
</dbReference>
<dbReference type="GO" id="GO:0003723">
    <property type="term" value="F:RNA binding"/>
    <property type="evidence" value="ECO:0007669"/>
    <property type="project" value="InterPro"/>
</dbReference>
<dbReference type="GO" id="GO:0160148">
    <property type="term" value="F:tRNA pseudouridine(55) synthase activity"/>
    <property type="evidence" value="ECO:0007669"/>
    <property type="project" value="UniProtKB-EC"/>
</dbReference>
<dbReference type="GO" id="GO:1990481">
    <property type="term" value="P:mRNA pseudouridine synthesis"/>
    <property type="evidence" value="ECO:0007669"/>
    <property type="project" value="TreeGrafter"/>
</dbReference>
<dbReference type="GO" id="GO:0031119">
    <property type="term" value="P:tRNA pseudouridine synthesis"/>
    <property type="evidence" value="ECO:0007669"/>
    <property type="project" value="UniProtKB-UniRule"/>
</dbReference>
<dbReference type="CDD" id="cd02573">
    <property type="entry name" value="PseudoU_synth_EcTruB"/>
    <property type="match status" value="1"/>
</dbReference>
<dbReference type="CDD" id="cd21152">
    <property type="entry name" value="PUA_TruB_bacterial"/>
    <property type="match status" value="1"/>
</dbReference>
<dbReference type="FunFam" id="2.30.130.10:FF:000004">
    <property type="entry name" value="tRNA pseudouridine synthase B"/>
    <property type="match status" value="1"/>
</dbReference>
<dbReference type="FunFam" id="3.30.2350.10:FF:000003">
    <property type="entry name" value="tRNA pseudouridine synthase B"/>
    <property type="match status" value="1"/>
</dbReference>
<dbReference type="Gene3D" id="3.30.2350.10">
    <property type="entry name" value="Pseudouridine synthase"/>
    <property type="match status" value="1"/>
</dbReference>
<dbReference type="Gene3D" id="2.30.130.10">
    <property type="entry name" value="PUA domain"/>
    <property type="match status" value="1"/>
</dbReference>
<dbReference type="HAMAP" id="MF_01080">
    <property type="entry name" value="TruB_bact"/>
    <property type="match status" value="1"/>
</dbReference>
<dbReference type="InterPro" id="IPR020103">
    <property type="entry name" value="PsdUridine_synth_cat_dom_sf"/>
</dbReference>
<dbReference type="InterPro" id="IPR002501">
    <property type="entry name" value="PsdUridine_synth_N"/>
</dbReference>
<dbReference type="InterPro" id="IPR015947">
    <property type="entry name" value="PUA-like_sf"/>
</dbReference>
<dbReference type="InterPro" id="IPR036974">
    <property type="entry name" value="PUA_sf"/>
</dbReference>
<dbReference type="InterPro" id="IPR014780">
    <property type="entry name" value="tRNA_psdUridine_synth_TruB"/>
</dbReference>
<dbReference type="InterPro" id="IPR015240">
    <property type="entry name" value="tRNA_sdUridine_synth_fam1_C"/>
</dbReference>
<dbReference type="InterPro" id="IPR032819">
    <property type="entry name" value="TruB_C"/>
</dbReference>
<dbReference type="NCBIfam" id="TIGR00431">
    <property type="entry name" value="TruB"/>
    <property type="match status" value="1"/>
</dbReference>
<dbReference type="PANTHER" id="PTHR13767:SF2">
    <property type="entry name" value="PSEUDOURIDYLATE SYNTHASE TRUB1"/>
    <property type="match status" value="1"/>
</dbReference>
<dbReference type="PANTHER" id="PTHR13767">
    <property type="entry name" value="TRNA-PSEUDOURIDINE SYNTHASE"/>
    <property type="match status" value="1"/>
</dbReference>
<dbReference type="Pfam" id="PF09157">
    <property type="entry name" value="TruB-C_2"/>
    <property type="match status" value="1"/>
</dbReference>
<dbReference type="Pfam" id="PF16198">
    <property type="entry name" value="TruB_C_2"/>
    <property type="match status" value="1"/>
</dbReference>
<dbReference type="Pfam" id="PF01509">
    <property type="entry name" value="TruB_N"/>
    <property type="match status" value="1"/>
</dbReference>
<dbReference type="SUPFAM" id="SSF55120">
    <property type="entry name" value="Pseudouridine synthase"/>
    <property type="match status" value="1"/>
</dbReference>
<dbReference type="SUPFAM" id="SSF88697">
    <property type="entry name" value="PUA domain-like"/>
    <property type="match status" value="1"/>
</dbReference>
<evidence type="ECO:0000255" key="1">
    <source>
        <dbReference type="HAMAP-Rule" id="MF_01080"/>
    </source>
</evidence>
<organism>
    <name type="scientific">Escherichia coli (strain UTI89 / UPEC)</name>
    <dbReference type="NCBI Taxonomy" id="364106"/>
    <lineage>
        <taxon>Bacteria</taxon>
        <taxon>Pseudomonadati</taxon>
        <taxon>Pseudomonadota</taxon>
        <taxon>Gammaproteobacteria</taxon>
        <taxon>Enterobacterales</taxon>
        <taxon>Enterobacteriaceae</taxon>
        <taxon>Escherichia</taxon>
    </lineage>
</organism>
<comment type="function">
    <text evidence="1">Responsible for synthesis of pseudouridine from uracil-55 in the psi GC loop of transfer RNAs.</text>
</comment>
<comment type="catalytic activity">
    <reaction evidence="1">
        <text>uridine(55) in tRNA = pseudouridine(55) in tRNA</text>
        <dbReference type="Rhea" id="RHEA:42532"/>
        <dbReference type="Rhea" id="RHEA-COMP:10101"/>
        <dbReference type="Rhea" id="RHEA-COMP:10102"/>
        <dbReference type="ChEBI" id="CHEBI:65314"/>
        <dbReference type="ChEBI" id="CHEBI:65315"/>
        <dbReference type="EC" id="5.4.99.25"/>
    </reaction>
</comment>
<comment type="similarity">
    <text evidence="1">Belongs to the pseudouridine synthase TruB family. Type 1 subfamily.</text>
</comment>
<proteinExistence type="inferred from homology"/>
<reference key="1">
    <citation type="journal article" date="2006" name="Proc. Natl. Acad. Sci. U.S.A.">
        <title>Identification of genes subject to positive selection in uropathogenic strains of Escherichia coli: a comparative genomics approach.</title>
        <authorList>
            <person name="Chen S.L."/>
            <person name="Hung C.-S."/>
            <person name="Xu J."/>
            <person name="Reigstad C.S."/>
            <person name="Magrini V."/>
            <person name="Sabo A."/>
            <person name="Blasiar D."/>
            <person name="Bieri T."/>
            <person name="Meyer R.R."/>
            <person name="Ozersky P."/>
            <person name="Armstrong J.R."/>
            <person name="Fulton R.S."/>
            <person name="Latreille J.P."/>
            <person name="Spieth J."/>
            <person name="Hooton T.M."/>
            <person name="Mardis E.R."/>
            <person name="Hultgren S.J."/>
            <person name="Gordon J.I."/>
        </authorList>
    </citation>
    <scope>NUCLEOTIDE SEQUENCE [LARGE SCALE GENOMIC DNA]</scope>
    <source>
        <strain>UTI89 / UPEC</strain>
    </source>
</reference>
<sequence>MSRPRRRGRDINGVLLLDKPQGMSSNDALQKVKRIYNANRAGHTGALDPLATGMLPICLGEATKFSQYLLDSDKRYRVIARLGQRTDTSDADGQIVEERPVTFSAEQLAAALDTFRGDIEQIPSMYSALKYQGKKLYEYARQGIEVPREARPITVYELLFIRHEGNELELEIHCSKGTYIRTIIDDLGEKLGCGAHVIYLRRLAVSKYPVERMVTLEHLRELVEQAEQQDIPAAELLDPLLMPMDSPASDYPVVNLPLTSSVYFKNGNPVRTSGAPLEGLVRVTEGENGKFIGMGEIDDEGRVAPRRLVVEYPA</sequence>
<feature type="chain" id="PRO_1000084588" description="tRNA pseudouridine synthase B">
    <location>
        <begin position="1"/>
        <end position="314"/>
    </location>
</feature>
<feature type="active site" description="Nucleophile" evidence="1">
    <location>
        <position position="48"/>
    </location>
</feature>
<feature type="binding site" evidence="1">
    <location>
        <position position="43"/>
    </location>
    <ligand>
        <name>substrate</name>
    </ligand>
</feature>
<feature type="binding site" evidence="1">
    <location>
        <position position="76"/>
    </location>
    <ligand>
        <name>substrate</name>
    </ligand>
</feature>
<feature type="binding site" evidence="1">
    <location>
        <position position="179"/>
    </location>
    <ligand>
        <name>substrate</name>
    </ligand>
</feature>
<feature type="binding site" evidence="1">
    <location>
        <position position="200"/>
    </location>
    <ligand>
        <name>substrate</name>
    </ligand>
</feature>
<accession>Q1R6H2</accession>
<gene>
    <name evidence="1" type="primary">truB</name>
    <name type="ordered locus">UTI89_C3596</name>
</gene>
<keyword id="KW-0413">Isomerase</keyword>
<keyword id="KW-0819">tRNA processing</keyword>
<name>TRUB_ECOUT</name>